<accession>P74104</accession>
<dbReference type="EC" id="4.1.99.12"/>
<dbReference type="EC" id="3.5.4.25"/>
<dbReference type="EMBL" id="BA000022">
    <property type="protein sequence ID" value="BAA18190.1"/>
    <property type="molecule type" value="Genomic_DNA"/>
</dbReference>
<dbReference type="PIR" id="S75629">
    <property type="entry name" value="S75629"/>
</dbReference>
<dbReference type="SMR" id="P74104"/>
<dbReference type="FunCoup" id="P74104">
    <property type="interactions" value="348"/>
</dbReference>
<dbReference type="STRING" id="1148.gene:10499063"/>
<dbReference type="PaxDb" id="1148-1653275"/>
<dbReference type="EnsemblBacteria" id="BAA18190">
    <property type="protein sequence ID" value="BAA18190"/>
    <property type="gene ID" value="BAA18190"/>
</dbReference>
<dbReference type="KEGG" id="syn:sll1894"/>
<dbReference type="eggNOG" id="COG0108">
    <property type="taxonomic scope" value="Bacteria"/>
</dbReference>
<dbReference type="eggNOG" id="COG0807">
    <property type="taxonomic scope" value="Bacteria"/>
</dbReference>
<dbReference type="InParanoid" id="P74104"/>
<dbReference type="PhylomeDB" id="P74104"/>
<dbReference type="UniPathway" id="UPA00275">
    <property type="reaction ID" value="UER00399"/>
</dbReference>
<dbReference type="UniPathway" id="UPA00275">
    <property type="reaction ID" value="UER00400"/>
</dbReference>
<dbReference type="Proteomes" id="UP000001425">
    <property type="component" value="Chromosome"/>
</dbReference>
<dbReference type="GO" id="GO:0005829">
    <property type="term" value="C:cytosol"/>
    <property type="evidence" value="ECO:0000318"/>
    <property type="project" value="GO_Central"/>
</dbReference>
<dbReference type="GO" id="GO:0008686">
    <property type="term" value="F:3,4-dihydroxy-2-butanone-4-phosphate synthase activity"/>
    <property type="evidence" value="ECO:0007669"/>
    <property type="project" value="UniProtKB-UniRule"/>
</dbReference>
<dbReference type="GO" id="GO:0005525">
    <property type="term" value="F:GTP binding"/>
    <property type="evidence" value="ECO:0007669"/>
    <property type="project" value="UniProtKB-KW"/>
</dbReference>
<dbReference type="GO" id="GO:0003935">
    <property type="term" value="F:GTP cyclohydrolase II activity"/>
    <property type="evidence" value="ECO:0000318"/>
    <property type="project" value="GO_Central"/>
</dbReference>
<dbReference type="GO" id="GO:0000287">
    <property type="term" value="F:magnesium ion binding"/>
    <property type="evidence" value="ECO:0007669"/>
    <property type="project" value="UniProtKB-UniRule"/>
</dbReference>
<dbReference type="GO" id="GO:0030145">
    <property type="term" value="F:manganese ion binding"/>
    <property type="evidence" value="ECO:0007669"/>
    <property type="project" value="UniProtKB-UniRule"/>
</dbReference>
<dbReference type="GO" id="GO:0008270">
    <property type="term" value="F:zinc ion binding"/>
    <property type="evidence" value="ECO:0007669"/>
    <property type="project" value="UniProtKB-UniRule"/>
</dbReference>
<dbReference type="GO" id="GO:0009231">
    <property type="term" value="P:riboflavin biosynthetic process"/>
    <property type="evidence" value="ECO:0000318"/>
    <property type="project" value="GO_Central"/>
</dbReference>
<dbReference type="CDD" id="cd00641">
    <property type="entry name" value="GTP_cyclohydro2"/>
    <property type="match status" value="1"/>
</dbReference>
<dbReference type="FunFam" id="3.40.50.10990:FF:000001">
    <property type="entry name" value="Riboflavin biosynthesis protein RibBA"/>
    <property type="match status" value="1"/>
</dbReference>
<dbReference type="FunFam" id="3.90.870.10:FF:000001">
    <property type="entry name" value="Riboflavin biosynthesis protein RibBA"/>
    <property type="match status" value="1"/>
</dbReference>
<dbReference type="Gene3D" id="3.90.870.10">
    <property type="entry name" value="DHBP synthase"/>
    <property type="match status" value="1"/>
</dbReference>
<dbReference type="Gene3D" id="3.40.50.10990">
    <property type="entry name" value="GTP cyclohydrolase II"/>
    <property type="match status" value="1"/>
</dbReference>
<dbReference type="HAMAP" id="MF_00179">
    <property type="entry name" value="RibA"/>
    <property type="match status" value="1"/>
</dbReference>
<dbReference type="HAMAP" id="MF_00180">
    <property type="entry name" value="RibB"/>
    <property type="match status" value="1"/>
</dbReference>
<dbReference type="HAMAP" id="MF_01283">
    <property type="entry name" value="RibBA"/>
    <property type="match status" value="1"/>
</dbReference>
<dbReference type="InterPro" id="IPR017945">
    <property type="entry name" value="DHBP_synth_RibB-like_a/b_dom"/>
</dbReference>
<dbReference type="InterPro" id="IPR000422">
    <property type="entry name" value="DHBP_synthase_RibB"/>
</dbReference>
<dbReference type="InterPro" id="IPR032677">
    <property type="entry name" value="GTP_cyclohydro_II"/>
</dbReference>
<dbReference type="InterPro" id="IPR000926">
    <property type="entry name" value="RibA"/>
</dbReference>
<dbReference type="InterPro" id="IPR036144">
    <property type="entry name" value="RibA-like_sf"/>
</dbReference>
<dbReference type="InterPro" id="IPR016299">
    <property type="entry name" value="Riboflavin_synth_RibBA"/>
</dbReference>
<dbReference type="NCBIfam" id="NF001591">
    <property type="entry name" value="PRK00393.1"/>
    <property type="match status" value="1"/>
</dbReference>
<dbReference type="NCBIfam" id="NF006803">
    <property type="entry name" value="PRK09311.1"/>
    <property type="match status" value="1"/>
</dbReference>
<dbReference type="NCBIfam" id="NF006806">
    <property type="entry name" value="PRK09319.1"/>
    <property type="match status" value="1"/>
</dbReference>
<dbReference type="NCBIfam" id="TIGR00505">
    <property type="entry name" value="ribA"/>
    <property type="match status" value="1"/>
</dbReference>
<dbReference type="NCBIfam" id="TIGR00506">
    <property type="entry name" value="ribB"/>
    <property type="match status" value="1"/>
</dbReference>
<dbReference type="PANTHER" id="PTHR21327:SF18">
    <property type="entry name" value="3,4-DIHYDROXY-2-BUTANONE 4-PHOSPHATE SYNTHASE"/>
    <property type="match status" value="1"/>
</dbReference>
<dbReference type="PANTHER" id="PTHR21327">
    <property type="entry name" value="GTP CYCLOHYDROLASE II-RELATED"/>
    <property type="match status" value="1"/>
</dbReference>
<dbReference type="Pfam" id="PF00926">
    <property type="entry name" value="DHBP_synthase"/>
    <property type="match status" value="1"/>
</dbReference>
<dbReference type="Pfam" id="PF00925">
    <property type="entry name" value="GTP_cyclohydro2"/>
    <property type="match status" value="1"/>
</dbReference>
<dbReference type="SUPFAM" id="SSF142695">
    <property type="entry name" value="RibA-like"/>
    <property type="match status" value="1"/>
</dbReference>
<dbReference type="SUPFAM" id="SSF55821">
    <property type="entry name" value="YrdC/RibB"/>
    <property type="match status" value="1"/>
</dbReference>
<name>RIBBA_SYNY3</name>
<evidence type="ECO:0000250" key="1"/>
<evidence type="ECO:0000255" key="2"/>
<evidence type="ECO:0000305" key="3"/>
<organism>
    <name type="scientific">Synechocystis sp. (strain ATCC 27184 / PCC 6803 / Kazusa)</name>
    <dbReference type="NCBI Taxonomy" id="1111708"/>
    <lineage>
        <taxon>Bacteria</taxon>
        <taxon>Bacillati</taxon>
        <taxon>Cyanobacteriota</taxon>
        <taxon>Cyanophyceae</taxon>
        <taxon>Synechococcales</taxon>
        <taxon>Merismopediaceae</taxon>
        <taxon>Synechocystis</taxon>
    </lineage>
</organism>
<proteinExistence type="inferred from homology"/>
<comment type="function">
    <text evidence="1">Catalyzes the conversion of D-ribulose 5-phosphate to formate and 3,4-dihydroxy-2-butanone 4-phosphate.</text>
</comment>
<comment type="function">
    <text evidence="1">Catalyzes the conversion of GTP to 2,5-diamino-6-ribosylamino-4(3H)-pyrimidinone 5'-phosphate (DARP), formate and pyrophosphate.</text>
</comment>
<comment type="catalytic activity">
    <reaction>
        <text>D-ribulose 5-phosphate = (2S)-2-hydroxy-3-oxobutyl phosphate + formate + H(+)</text>
        <dbReference type="Rhea" id="RHEA:18457"/>
        <dbReference type="ChEBI" id="CHEBI:15378"/>
        <dbReference type="ChEBI" id="CHEBI:15740"/>
        <dbReference type="ChEBI" id="CHEBI:58121"/>
        <dbReference type="ChEBI" id="CHEBI:58830"/>
        <dbReference type="EC" id="4.1.99.12"/>
    </reaction>
</comment>
<comment type="catalytic activity">
    <reaction>
        <text>GTP + 4 H2O = 2,5-diamino-6-hydroxy-4-(5-phosphoribosylamino)-pyrimidine + formate + 2 phosphate + 3 H(+)</text>
        <dbReference type="Rhea" id="RHEA:23704"/>
        <dbReference type="ChEBI" id="CHEBI:15377"/>
        <dbReference type="ChEBI" id="CHEBI:15378"/>
        <dbReference type="ChEBI" id="CHEBI:15740"/>
        <dbReference type="ChEBI" id="CHEBI:37565"/>
        <dbReference type="ChEBI" id="CHEBI:43474"/>
        <dbReference type="ChEBI" id="CHEBI:58614"/>
        <dbReference type="EC" id="3.5.4.25"/>
    </reaction>
</comment>
<comment type="cofactor">
    <cofactor evidence="1">
        <name>Mg(2+)</name>
        <dbReference type="ChEBI" id="CHEBI:18420"/>
    </cofactor>
    <cofactor evidence="1">
        <name>Mn(2+)</name>
        <dbReference type="ChEBI" id="CHEBI:29035"/>
    </cofactor>
    <text evidence="1">Binds 2 divalent metal cations per subunit. Magnesium or manganese.</text>
</comment>
<comment type="cofactor">
    <cofactor evidence="1">
        <name>Zn(2+)</name>
        <dbReference type="ChEBI" id="CHEBI:29105"/>
    </cofactor>
    <text evidence="1">Binds 1 zinc ion per subunit.</text>
</comment>
<comment type="pathway">
    <text>Cofactor biosynthesis; riboflavin biosynthesis; 2-hydroxy-3-oxobutyl phosphate from D-ribulose 5-phosphate: step 1/1.</text>
</comment>
<comment type="pathway">
    <text>Cofactor biosynthesis; riboflavin biosynthesis; 5-amino-6-(D-ribitylamino)uracil from GTP: step 1/4.</text>
</comment>
<comment type="similarity">
    <text evidence="3">In the N-terminal section; belongs to the DHBP synthase family.</text>
</comment>
<comment type="similarity">
    <text evidence="3">In the central section; belongs to the GTP cyclohydrolase II family.</text>
</comment>
<protein>
    <recommendedName>
        <fullName>Riboflavin biosynthesis protein RibBA</fullName>
    </recommendedName>
    <domain>
        <recommendedName>
            <fullName>3,4-dihydroxy-2-butanone 4-phosphate synthase</fullName>
            <shortName>DHBP synthase</shortName>
            <ecNumber>4.1.99.12</ecNumber>
        </recommendedName>
    </domain>
    <domain>
        <recommendedName>
            <fullName>GTP cyclohydrolase-2</fullName>
            <ecNumber>3.5.4.25</ecNumber>
        </recommendedName>
        <alternativeName>
            <fullName>GTP cyclohydrolase II</fullName>
        </alternativeName>
    </domain>
</protein>
<gene>
    <name type="primary">ribBA</name>
    <name type="synonym">ribA</name>
    <name type="ordered locus">sll1894</name>
</gene>
<keyword id="KW-0342">GTP-binding</keyword>
<keyword id="KW-0378">Hydrolase</keyword>
<keyword id="KW-0456">Lyase</keyword>
<keyword id="KW-0460">Magnesium</keyword>
<keyword id="KW-0464">Manganese</keyword>
<keyword id="KW-0479">Metal-binding</keyword>
<keyword id="KW-0511">Multifunctional enzyme</keyword>
<keyword id="KW-0547">Nucleotide-binding</keyword>
<keyword id="KW-1185">Reference proteome</keyword>
<keyword id="KW-0686">Riboflavin biosynthesis</keyword>
<keyword id="KW-0862">Zinc</keyword>
<sequence length="556" mass="61682">MFDAIDAALADIKAGKAVVVVDDENRENEGDLICAAQFATPALVNFMAVEARGLICLAMTGDRLDELDLPLMVSKNTDSNQTAFTVSIDAAPHLGVTTGISAEDRARTIQIAINPVTRPEDLSRPGHIFPLRAKTGGVLKRAGHTEAAVDLSRLAGLYPAGVICEIQNADGSMARLPELVEYARKYDLKLISIADLISYRLQHDRFVQRETICEFPSQFGEFKLYAYRNLLDQTEHIAIVKGDPSEFGQQPVMVRMHSECLTGDALGSLRCDCRMQLQAALKMLENHGLGVVVYLRQEGRGIGLVNKLKAYSLQDLGYDTVEANERLGFPADLRDYGMGAQMLNDLGVKQIRLITNNPRKIAGLKGYGLEIVERVPLLIEANDYNSHYLTTKAEKLGHWLVKNYLLAIAIKFTPNVASAQQRYEKLEKIRALLQGTPLMVHEDNRPVAIALFGKNSLIFHVGLDQNLPSGQPWQKHDHSPYPALVKDFLVQLKQWPDLQALAFLIAQGKDPMETLQVSLDRENVSFADLTADALNQWQPQTVYTYSKQGSGEMTNR</sequence>
<reference key="1">
    <citation type="journal article" date="1996" name="DNA Res.">
        <title>Sequence analysis of the genome of the unicellular cyanobacterium Synechocystis sp. strain PCC6803. II. Sequence determination of the entire genome and assignment of potential protein-coding regions.</title>
        <authorList>
            <person name="Kaneko T."/>
            <person name="Sato S."/>
            <person name="Kotani H."/>
            <person name="Tanaka A."/>
            <person name="Asamizu E."/>
            <person name="Nakamura Y."/>
            <person name="Miyajima N."/>
            <person name="Hirosawa M."/>
            <person name="Sugiura M."/>
            <person name="Sasamoto S."/>
            <person name="Kimura T."/>
            <person name="Hosouchi T."/>
            <person name="Matsuno A."/>
            <person name="Muraki A."/>
            <person name="Nakazaki N."/>
            <person name="Naruo K."/>
            <person name="Okumura S."/>
            <person name="Shimpo S."/>
            <person name="Takeuchi C."/>
            <person name="Wada T."/>
            <person name="Watanabe A."/>
            <person name="Yamada M."/>
            <person name="Yasuda M."/>
            <person name="Tabata S."/>
        </authorList>
    </citation>
    <scope>NUCLEOTIDE SEQUENCE [LARGE SCALE GENOMIC DNA]</scope>
    <source>
        <strain>ATCC 27184 / PCC 6803 / Kazusa</strain>
    </source>
</reference>
<feature type="chain" id="PRO_0000151743" description="Riboflavin biosynthesis protein RibBA">
    <location>
        <begin position="1"/>
        <end position="556"/>
    </location>
</feature>
<feature type="region of interest" description="DHBP synthase">
    <location>
        <begin position="1"/>
        <end position="202"/>
    </location>
</feature>
<feature type="region of interest" description="GTP cyclohydrolase II">
    <location>
        <begin position="203"/>
        <end position="402"/>
    </location>
</feature>
<feature type="region of interest" description="Unknown">
    <location>
        <begin position="403"/>
        <end position="556"/>
    </location>
</feature>
<feature type="active site" description="Proton acceptor; for GTP cyclohydrolase activity" evidence="2">
    <location>
        <position position="332"/>
    </location>
</feature>
<feature type="active site" description="Nucleophile; for GTP cyclohydrolase activity" evidence="1">
    <location>
        <position position="334"/>
    </location>
</feature>
<feature type="binding site" evidence="1">
    <location>
        <begin position="26"/>
        <end position="27"/>
    </location>
    <ligand>
        <name>D-ribulose 5-phosphate</name>
        <dbReference type="ChEBI" id="CHEBI:58121"/>
    </ligand>
</feature>
<feature type="binding site" evidence="1">
    <location>
        <position position="27"/>
    </location>
    <ligand>
        <name>Mg(2+)</name>
        <dbReference type="ChEBI" id="CHEBI:18420"/>
        <label>1</label>
    </ligand>
</feature>
<feature type="binding site" evidence="1">
    <location>
        <position position="27"/>
    </location>
    <ligand>
        <name>Mg(2+)</name>
        <dbReference type="ChEBI" id="CHEBI:18420"/>
        <label>2</label>
    </ligand>
</feature>
<feature type="binding site" evidence="1">
    <location>
        <position position="31"/>
    </location>
    <ligand>
        <name>D-ribulose 5-phosphate</name>
        <dbReference type="ChEBI" id="CHEBI:58121"/>
    </ligand>
</feature>
<feature type="binding site" evidence="1">
    <location>
        <begin position="141"/>
        <end position="145"/>
    </location>
    <ligand>
        <name>D-ribulose 5-phosphate</name>
        <dbReference type="ChEBI" id="CHEBI:58121"/>
    </ligand>
</feature>
<feature type="binding site" evidence="1">
    <location>
        <position position="144"/>
    </location>
    <ligand>
        <name>Mg(2+)</name>
        <dbReference type="ChEBI" id="CHEBI:18420"/>
        <label>2</label>
    </ligand>
</feature>
<feature type="binding site" evidence="1">
    <location>
        <position position="165"/>
    </location>
    <ligand>
        <name>D-ribulose 5-phosphate</name>
        <dbReference type="ChEBI" id="CHEBI:58121"/>
    </ligand>
</feature>
<feature type="binding site" evidence="1">
    <location>
        <begin position="255"/>
        <end position="259"/>
    </location>
    <ligand>
        <name>GTP</name>
        <dbReference type="ChEBI" id="CHEBI:37565"/>
    </ligand>
</feature>
<feature type="binding site" evidence="1">
    <location>
        <position position="260"/>
    </location>
    <ligand>
        <name>Zn(2+)</name>
        <dbReference type="ChEBI" id="CHEBI:29105"/>
        <note>catalytic</note>
    </ligand>
</feature>
<feature type="binding site" evidence="1">
    <location>
        <position position="271"/>
    </location>
    <ligand>
        <name>Zn(2+)</name>
        <dbReference type="ChEBI" id="CHEBI:29105"/>
        <note>catalytic</note>
    </ligand>
</feature>
<feature type="binding site" evidence="1">
    <location>
        <position position="273"/>
    </location>
    <ligand>
        <name>Zn(2+)</name>
        <dbReference type="ChEBI" id="CHEBI:29105"/>
        <note>catalytic</note>
    </ligand>
</feature>
<feature type="binding site" evidence="1">
    <location>
        <position position="276"/>
    </location>
    <ligand>
        <name>GTP</name>
        <dbReference type="ChEBI" id="CHEBI:37565"/>
    </ligand>
</feature>
<feature type="binding site" evidence="1">
    <location>
        <begin position="298"/>
        <end position="300"/>
    </location>
    <ligand>
        <name>GTP</name>
        <dbReference type="ChEBI" id="CHEBI:37565"/>
    </ligand>
</feature>
<feature type="binding site" evidence="1">
    <location>
        <position position="320"/>
    </location>
    <ligand>
        <name>GTP</name>
        <dbReference type="ChEBI" id="CHEBI:37565"/>
    </ligand>
</feature>
<feature type="binding site" evidence="1">
    <location>
        <position position="355"/>
    </location>
    <ligand>
        <name>GTP</name>
        <dbReference type="ChEBI" id="CHEBI:37565"/>
    </ligand>
</feature>
<feature type="binding site" evidence="1">
    <location>
        <position position="360"/>
    </location>
    <ligand>
        <name>GTP</name>
        <dbReference type="ChEBI" id="CHEBI:37565"/>
    </ligand>
</feature>
<feature type="site" description="Essential for DHBP synthase activity" evidence="1">
    <location>
        <position position="127"/>
    </location>
</feature>
<feature type="site" description="Essential for DHBP synthase activity" evidence="1">
    <location>
        <position position="165"/>
    </location>
</feature>